<reference key="1">
    <citation type="journal article" date="2001" name="Biochim. Biophys. Acta">
        <title>Different expression patterns for ubiquitous calpains and Capn3 splice variants in monkey ocular tissues.</title>
        <authorList>
            <person name="Nakajima T."/>
            <person name="Fukiage C."/>
            <person name="Azuma M."/>
            <person name="Ma H."/>
            <person name="Shearer T.R."/>
        </authorList>
    </citation>
    <scope>NUCLEOTIDE SEQUENCE [MRNA]</scope>
    <source>
        <tissue>Corneal epithelium</tissue>
    </source>
</reference>
<comment type="function">
    <text evidence="2">Calcium-regulated non-lysosomal thiol-protease. Proteolytically cleaves CTBP1. Mediates, with UTP25, the proteasome-independent degradation of p53/TP53.</text>
</comment>
<comment type="catalytic activity">
    <reaction>
        <text>Broad endopeptidase activity.</text>
        <dbReference type="EC" id="3.4.22.54"/>
    </reaction>
</comment>
<comment type="activity regulation">
    <text evidence="1">Activated by micromolar concentrations of calcium and inhibited by calpastatin.</text>
</comment>
<comment type="subunit">
    <text evidence="2">Homodimer; via EF-hand domain 4. Interacts with TTN/titin. Interacts with CMYA5; this interaction, which results in CMYA5 proteolysis, may protect CAPN3 from autolysis. Interacts with SIMC1. Interacts with UTP25; the interaction is required for CAPN3 translocation to the nucleolus.</text>
</comment>
<comment type="subcellular location">
    <subcellularLocation>
        <location evidence="2">Cytoplasm</location>
    </subcellularLocation>
    <subcellularLocation>
        <location evidence="2">Nucleus</location>
        <location evidence="2">Nucleolus</location>
    </subcellularLocation>
</comment>
<comment type="similarity">
    <text evidence="6">Belongs to the peptidase C2 family.</text>
</comment>
<proteinExistence type="evidence at transcript level"/>
<name>CAN3_MACFA</name>
<gene>
    <name type="primary">CAPN3</name>
</gene>
<evidence type="ECO:0000250" key="1"/>
<evidence type="ECO:0000250" key="2">
    <source>
        <dbReference type="UniProtKB" id="P20807"/>
    </source>
</evidence>
<evidence type="ECO:0000255" key="3">
    <source>
        <dbReference type="PROSITE-ProRule" id="PRU00239"/>
    </source>
</evidence>
<evidence type="ECO:0000255" key="4">
    <source>
        <dbReference type="PROSITE-ProRule" id="PRU00448"/>
    </source>
</evidence>
<evidence type="ECO:0000256" key="5">
    <source>
        <dbReference type="SAM" id="MobiDB-lite"/>
    </source>
</evidence>
<evidence type="ECO:0000305" key="6"/>
<organism>
    <name type="scientific">Macaca fascicularis</name>
    <name type="common">Crab-eating macaque</name>
    <name type="synonym">Cynomolgus monkey</name>
    <dbReference type="NCBI Taxonomy" id="9541"/>
    <lineage>
        <taxon>Eukaryota</taxon>
        <taxon>Metazoa</taxon>
        <taxon>Chordata</taxon>
        <taxon>Craniata</taxon>
        <taxon>Vertebrata</taxon>
        <taxon>Euteleostomi</taxon>
        <taxon>Mammalia</taxon>
        <taxon>Eutheria</taxon>
        <taxon>Euarchontoglires</taxon>
        <taxon>Primates</taxon>
        <taxon>Haplorrhini</taxon>
        <taxon>Catarrhini</taxon>
        <taxon>Cercopithecidae</taxon>
        <taxon>Cercopithecinae</taxon>
        <taxon>Macaca</taxon>
    </lineage>
</organism>
<accession>Q9GLG7</accession>
<dbReference type="EC" id="3.4.22.54"/>
<dbReference type="EMBL" id="AF277376">
    <property type="protein sequence ID" value="AAG27599.1"/>
    <property type="molecule type" value="mRNA"/>
</dbReference>
<dbReference type="RefSeq" id="NP_001274630.1">
    <property type="nucleotide sequence ID" value="NM_001287701.1"/>
</dbReference>
<dbReference type="RefSeq" id="XP_045253153.1">
    <property type="nucleotide sequence ID" value="XM_045397218.2"/>
</dbReference>
<dbReference type="SMR" id="Q9GLG7"/>
<dbReference type="STRING" id="9541.ENSMFAP00000012177"/>
<dbReference type="MEROPS" id="C02.004"/>
<dbReference type="GeneID" id="102115794"/>
<dbReference type="VEuPathDB" id="HostDB:ENSMFAG00000008163"/>
<dbReference type="eggNOG" id="KOG0045">
    <property type="taxonomic scope" value="Eukaryota"/>
</dbReference>
<dbReference type="BRENDA" id="3.4.22.54">
    <property type="organism ID" value="1793"/>
</dbReference>
<dbReference type="Proteomes" id="UP000233100">
    <property type="component" value="Chromosome 7"/>
</dbReference>
<dbReference type="GO" id="GO:0005737">
    <property type="term" value="C:cytoplasm"/>
    <property type="evidence" value="ECO:0000250"/>
    <property type="project" value="UniProtKB"/>
</dbReference>
<dbReference type="GO" id="GO:0005829">
    <property type="term" value="C:cytosol"/>
    <property type="evidence" value="ECO:0000250"/>
    <property type="project" value="UniProtKB"/>
</dbReference>
<dbReference type="GO" id="GO:0030016">
    <property type="term" value="C:myofibril"/>
    <property type="evidence" value="ECO:0000250"/>
    <property type="project" value="UniProtKB"/>
</dbReference>
<dbReference type="GO" id="GO:0005730">
    <property type="term" value="C:nucleolus"/>
    <property type="evidence" value="ECO:0000250"/>
    <property type="project" value="UniProtKB"/>
</dbReference>
<dbReference type="GO" id="GO:0005634">
    <property type="term" value="C:nucleus"/>
    <property type="evidence" value="ECO:0000250"/>
    <property type="project" value="UniProtKB"/>
</dbReference>
<dbReference type="GO" id="GO:0005886">
    <property type="term" value="C:plasma membrane"/>
    <property type="evidence" value="ECO:0000250"/>
    <property type="project" value="UniProtKB"/>
</dbReference>
<dbReference type="GO" id="GO:0032991">
    <property type="term" value="C:protein-containing complex"/>
    <property type="evidence" value="ECO:0000250"/>
    <property type="project" value="UniProtKB"/>
</dbReference>
<dbReference type="GO" id="GO:0030315">
    <property type="term" value="C:T-tubule"/>
    <property type="evidence" value="ECO:0000250"/>
    <property type="project" value="UniProtKB"/>
</dbReference>
<dbReference type="GO" id="GO:0030018">
    <property type="term" value="C:Z disc"/>
    <property type="evidence" value="ECO:0000250"/>
    <property type="project" value="UniProtKB"/>
</dbReference>
<dbReference type="GO" id="GO:0005509">
    <property type="term" value="F:calcium ion binding"/>
    <property type="evidence" value="ECO:0000250"/>
    <property type="project" value="UniProtKB"/>
</dbReference>
<dbReference type="GO" id="GO:0004198">
    <property type="term" value="F:calcium-dependent cysteine-type endopeptidase activity"/>
    <property type="evidence" value="ECO:0000250"/>
    <property type="project" value="UniProtKB"/>
</dbReference>
<dbReference type="GO" id="GO:0003824">
    <property type="term" value="F:catalytic activity"/>
    <property type="evidence" value="ECO:0000250"/>
    <property type="project" value="UniProtKB"/>
</dbReference>
<dbReference type="GO" id="GO:0055103">
    <property type="term" value="F:ligase regulator activity"/>
    <property type="evidence" value="ECO:0000250"/>
    <property type="project" value="UniProtKB"/>
</dbReference>
<dbReference type="GO" id="GO:0060090">
    <property type="term" value="F:molecular adaptor activity"/>
    <property type="evidence" value="ECO:0000250"/>
    <property type="project" value="UniProtKB"/>
</dbReference>
<dbReference type="GO" id="GO:0008233">
    <property type="term" value="F:peptidase activity"/>
    <property type="evidence" value="ECO:0000250"/>
    <property type="project" value="UniProtKB"/>
</dbReference>
<dbReference type="GO" id="GO:0031402">
    <property type="term" value="F:sodium ion binding"/>
    <property type="evidence" value="ECO:0000250"/>
    <property type="project" value="UniProtKB"/>
</dbReference>
<dbReference type="GO" id="GO:0008307">
    <property type="term" value="F:structural constituent of muscle"/>
    <property type="evidence" value="ECO:0000250"/>
    <property type="project" value="UniProtKB"/>
</dbReference>
<dbReference type="GO" id="GO:0031432">
    <property type="term" value="F:titin binding"/>
    <property type="evidence" value="ECO:0000250"/>
    <property type="project" value="UniProtKB"/>
</dbReference>
<dbReference type="GO" id="GO:1990092">
    <property type="term" value="P:calcium-dependent self proteolysis"/>
    <property type="evidence" value="ECO:0000250"/>
    <property type="project" value="UniProtKB"/>
</dbReference>
<dbReference type="GO" id="GO:0071277">
    <property type="term" value="P:cellular response to calcium ion"/>
    <property type="evidence" value="ECO:0000250"/>
    <property type="project" value="UniProtKB"/>
</dbReference>
<dbReference type="GO" id="GO:0071472">
    <property type="term" value="P:cellular response to salt stress"/>
    <property type="evidence" value="ECO:0000250"/>
    <property type="project" value="UniProtKB"/>
</dbReference>
<dbReference type="GO" id="GO:0061061">
    <property type="term" value="P:muscle structure development"/>
    <property type="evidence" value="ECO:0000250"/>
    <property type="project" value="UniProtKB"/>
</dbReference>
<dbReference type="GO" id="GO:0030239">
    <property type="term" value="P:myofibril assembly"/>
    <property type="evidence" value="ECO:0000250"/>
    <property type="project" value="UniProtKB"/>
</dbReference>
<dbReference type="GO" id="GO:0043066">
    <property type="term" value="P:negative regulation of apoptotic process"/>
    <property type="evidence" value="ECO:0000250"/>
    <property type="project" value="UniProtKB"/>
</dbReference>
<dbReference type="GO" id="GO:0045892">
    <property type="term" value="P:negative regulation of DNA-templated transcription"/>
    <property type="evidence" value="ECO:0000250"/>
    <property type="project" value="UniProtKB"/>
</dbReference>
<dbReference type="GO" id="GO:0033234">
    <property type="term" value="P:negative regulation of protein sumoylation"/>
    <property type="evidence" value="ECO:0000250"/>
    <property type="project" value="UniProtKB"/>
</dbReference>
<dbReference type="GO" id="GO:0045893">
    <property type="term" value="P:positive regulation of DNA-templated transcription"/>
    <property type="evidence" value="ECO:0000250"/>
    <property type="project" value="UniProtKB"/>
</dbReference>
<dbReference type="GO" id="GO:0045862">
    <property type="term" value="P:positive regulation of proteolysis"/>
    <property type="evidence" value="ECO:0000250"/>
    <property type="project" value="UniProtKB"/>
</dbReference>
<dbReference type="GO" id="GO:0051281">
    <property type="term" value="P:positive regulation of release of sequestered calcium ion into cytosol"/>
    <property type="evidence" value="ECO:0000250"/>
    <property type="project" value="UniProtKB"/>
</dbReference>
<dbReference type="GO" id="GO:0014718">
    <property type="term" value="P:positive regulation of satellite cell activation involved in skeletal muscle regeneration"/>
    <property type="evidence" value="ECO:0000250"/>
    <property type="project" value="UniProtKB"/>
</dbReference>
<dbReference type="GO" id="GO:0030163">
    <property type="term" value="P:protein catabolic process"/>
    <property type="evidence" value="ECO:0000250"/>
    <property type="project" value="UniProtKB"/>
</dbReference>
<dbReference type="GO" id="GO:0072657">
    <property type="term" value="P:protein localization to membrane"/>
    <property type="evidence" value="ECO:0000250"/>
    <property type="project" value="UniProtKB"/>
</dbReference>
<dbReference type="GO" id="GO:0065003">
    <property type="term" value="P:protein-containing complex assembly"/>
    <property type="evidence" value="ECO:0000250"/>
    <property type="project" value="UniProtKB"/>
</dbReference>
<dbReference type="GO" id="GO:0006508">
    <property type="term" value="P:proteolysis"/>
    <property type="evidence" value="ECO:0000250"/>
    <property type="project" value="UniProtKB"/>
</dbReference>
<dbReference type="GO" id="GO:0043122">
    <property type="term" value="P:regulation of canonical NF-kappaB signal transduction"/>
    <property type="evidence" value="ECO:0000250"/>
    <property type="project" value="UniProtKB"/>
</dbReference>
<dbReference type="GO" id="GO:0051592">
    <property type="term" value="P:response to calcium ion"/>
    <property type="evidence" value="ECO:0000250"/>
    <property type="project" value="UniProtKB"/>
</dbReference>
<dbReference type="GO" id="GO:0014850">
    <property type="term" value="P:response to muscle activity"/>
    <property type="evidence" value="ECO:0000250"/>
    <property type="project" value="UniProtKB"/>
</dbReference>
<dbReference type="GO" id="GO:0045214">
    <property type="term" value="P:sarcomere organization"/>
    <property type="evidence" value="ECO:0000250"/>
    <property type="project" value="UniProtKB"/>
</dbReference>
<dbReference type="GO" id="GO:0097264">
    <property type="term" value="P:self proteolysis"/>
    <property type="evidence" value="ECO:0000250"/>
    <property type="project" value="UniProtKB"/>
</dbReference>
<dbReference type="CDD" id="cd00214">
    <property type="entry name" value="Calpain_III"/>
    <property type="match status" value="1"/>
</dbReference>
<dbReference type="CDD" id="cd00044">
    <property type="entry name" value="CysPc"/>
    <property type="match status" value="1"/>
</dbReference>
<dbReference type="CDD" id="cd16190">
    <property type="entry name" value="EFh_PEF_CAPN3"/>
    <property type="match status" value="1"/>
</dbReference>
<dbReference type="FunFam" id="3.90.70.10:FF:000555">
    <property type="entry name" value="Calpain-3"/>
    <property type="match status" value="1"/>
</dbReference>
<dbReference type="FunFam" id="1.10.238.10:FF:000065">
    <property type="entry name" value="calpain-3 isoform X1"/>
    <property type="match status" value="1"/>
</dbReference>
<dbReference type="FunFam" id="2.60.120.380:FF:000002">
    <property type="entry name" value="calpain-3 isoform X1"/>
    <property type="match status" value="1"/>
</dbReference>
<dbReference type="Gene3D" id="2.60.120.380">
    <property type="match status" value="1"/>
</dbReference>
<dbReference type="Gene3D" id="3.90.70.10">
    <property type="entry name" value="Cysteine proteinases"/>
    <property type="match status" value="1"/>
</dbReference>
<dbReference type="Gene3D" id="1.10.238.10">
    <property type="entry name" value="EF-hand"/>
    <property type="match status" value="1"/>
</dbReference>
<dbReference type="InterPro" id="IPR033883">
    <property type="entry name" value="C2_III"/>
</dbReference>
<dbReference type="InterPro" id="IPR022684">
    <property type="entry name" value="Calpain_cysteine_protease"/>
</dbReference>
<dbReference type="InterPro" id="IPR022682">
    <property type="entry name" value="Calpain_domain_III"/>
</dbReference>
<dbReference type="InterPro" id="IPR022683">
    <property type="entry name" value="Calpain_III"/>
</dbReference>
<dbReference type="InterPro" id="IPR036213">
    <property type="entry name" value="Calpain_III_sf"/>
</dbReference>
<dbReference type="InterPro" id="IPR054069">
    <property type="entry name" value="CAPN3/13-like_C_EFh"/>
</dbReference>
<dbReference type="InterPro" id="IPR029531">
    <property type="entry name" value="CAPN3_PEF"/>
</dbReference>
<dbReference type="InterPro" id="IPR011992">
    <property type="entry name" value="EF-hand-dom_pair"/>
</dbReference>
<dbReference type="InterPro" id="IPR018247">
    <property type="entry name" value="EF_Hand_1_Ca_BS"/>
</dbReference>
<dbReference type="InterPro" id="IPR002048">
    <property type="entry name" value="EF_hand_dom"/>
</dbReference>
<dbReference type="InterPro" id="IPR038765">
    <property type="entry name" value="Papain-like_cys_pep_sf"/>
</dbReference>
<dbReference type="InterPro" id="IPR000169">
    <property type="entry name" value="Pept_cys_AS"/>
</dbReference>
<dbReference type="InterPro" id="IPR001300">
    <property type="entry name" value="Peptidase_C2_calpain_cat"/>
</dbReference>
<dbReference type="PANTHER" id="PTHR10183">
    <property type="entry name" value="CALPAIN"/>
    <property type="match status" value="1"/>
</dbReference>
<dbReference type="PANTHER" id="PTHR10183:SF329">
    <property type="entry name" value="CALPAIN-3"/>
    <property type="match status" value="1"/>
</dbReference>
<dbReference type="Pfam" id="PF01067">
    <property type="entry name" value="Calpain_III"/>
    <property type="match status" value="1"/>
</dbReference>
<dbReference type="Pfam" id="PF16648">
    <property type="entry name" value="Calpain_u2"/>
    <property type="match status" value="1"/>
</dbReference>
<dbReference type="Pfam" id="PF21875">
    <property type="entry name" value="CAPN13-like_C_EFh"/>
    <property type="match status" value="1"/>
</dbReference>
<dbReference type="Pfam" id="PF13833">
    <property type="entry name" value="EF-hand_8"/>
    <property type="match status" value="1"/>
</dbReference>
<dbReference type="Pfam" id="PF00648">
    <property type="entry name" value="Peptidase_C2"/>
    <property type="match status" value="1"/>
</dbReference>
<dbReference type="PRINTS" id="PR00704">
    <property type="entry name" value="CALPAIN"/>
</dbReference>
<dbReference type="SMART" id="SM00720">
    <property type="entry name" value="calpain_III"/>
    <property type="match status" value="1"/>
</dbReference>
<dbReference type="SMART" id="SM00230">
    <property type="entry name" value="CysPc"/>
    <property type="match status" value="1"/>
</dbReference>
<dbReference type="SMART" id="SM00054">
    <property type="entry name" value="EFh"/>
    <property type="match status" value="3"/>
</dbReference>
<dbReference type="SUPFAM" id="SSF49758">
    <property type="entry name" value="Calpain large subunit, middle domain (domain III)"/>
    <property type="match status" value="1"/>
</dbReference>
<dbReference type="SUPFAM" id="SSF54001">
    <property type="entry name" value="Cysteine proteinases"/>
    <property type="match status" value="1"/>
</dbReference>
<dbReference type="SUPFAM" id="SSF47473">
    <property type="entry name" value="EF-hand"/>
    <property type="match status" value="1"/>
</dbReference>
<dbReference type="PROSITE" id="PS50203">
    <property type="entry name" value="CALPAIN_CAT"/>
    <property type="match status" value="1"/>
</dbReference>
<dbReference type="PROSITE" id="PS00018">
    <property type="entry name" value="EF_HAND_1"/>
    <property type="match status" value="2"/>
</dbReference>
<dbReference type="PROSITE" id="PS50222">
    <property type="entry name" value="EF_HAND_2"/>
    <property type="match status" value="4"/>
</dbReference>
<dbReference type="PROSITE" id="PS00139">
    <property type="entry name" value="THIOL_PROTEASE_CYS"/>
    <property type="match status" value="1"/>
</dbReference>
<protein>
    <recommendedName>
        <fullName>Calpain-3</fullName>
        <ecNumber>3.4.22.54</ecNumber>
    </recommendedName>
    <alternativeName>
        <fullName>Calcium-activated neutral proteinase 3</fullName>
        <shortName>CANP 3</shortName>
    </alternativeName>
    <alternativeName>
        <fullName>Calpain L3</fullName>
    </alternativeName>
    <alternativeName>
        <fullName>Calpain p94</fullName>
    </alternativeName>
    <alternativeName>
        <fullName>Cn94</fullName>
    </alternativeName>
    <alternativeName>
        <fullName>Muscle-specific calcium-activated neutral protease 3</fullName>
    </alternativeName>
</protein>
<sequence>MPTVISASVAPRTAAEPRSPGPVPHPAQSKATEAGGGNASGIYSAIISRNFPIIGVKEKTFEQLHKKCLEKKVLYVDPEFPPDETSLFYSQKFPIQFIWKRPPEICENPRFIIDGANRTDICQGDLGDCWFLAAIACLTLNQRLLFRVIPHDQSFIENYAGIFHFQFWRYGEWVDVVIDDCLPTYNNQLVFTKSNHRNEFWSALLEKAYAKLHGSYEALKGGNTTEAMEDFTGGVTEFFEIRDAPSDMHKIMKKAIERGSLMGCSIDDGTNMTYGTSPSGLNMGELIARMVRNMDNSLFRDSDLDPRASVERPTRTIVPVQYETRMACGLVRGHAYSVTGLDEVLFKGEKVKLVRLRNPWGQVEWNGSWSDGWKDWSFVDKDEKARLQHQVTEDGEFWMSYEDFIYHFTKLEICNLTADALQSDKLQTWTVSVNEGRWVRGCSAGGCRNFPDTFWTNPQYRLKLLEEDDDPDDSEVICSFLVALMQKNRRKDRKLGANLFTIGFAIYEVPKEMHGNRQHLQKDFFLYNASRARSKTYINMREVSQRFRLPPSEYVIVPSTYEPHQEGEFILRVFSEKRNLSEEVENTISVDRPVPIIFVSDRANSNKELGVDQESEEGKGKTSPDKQEQSPQPQPGSSDQESEEQQQFRNIFKQIAGDDMEICADELKKVLNTVVNKHKDLKTHGFTLESCRSMIALMDTDGSGKLNLQEFHHLWNKIKAWQKIFKHYDTDQSGTINSYEMRNAVNDAGFHLNNQLYDIITMRYADKHMNIDFDSFICCFVRLEGMFRAFHAFDKDGDGIIKLNVLEWLQLTMYA</sequence>
<keyword id="KW-0106">Calcium</keyword>
<keyword id="KW-0963">Cytoplasm</keyword>
<keyword id="KW-0378">Hydrolase</keyword>
<keyword id="KW-0479">Metal-binding</keyword>
<keyword id="KW-0539">Nucleus</keyword>
<keyword id="KW-0645">Protease</keyword>
<keyword id="KW-1185">Reference proteome</keyword>
<keyword id="KW-0677">Repeat</keyword>
<keyword id="KW-0788">Thiol protease</keyword>
<feature type="chain" id="PRO_0000207707" description="Calpain-3">
    <location>
        <begin position="1"/>
        <end position="815"/>
    </location>
</feature>
<feature type="domain" description="Calpain catalytic" evidence="3">
    <location>
        <begin position="74"/>
        <end position="417"/>
    </location>
</feature>
<feature type="domain" description="EF-hand 1" evidence="4">
    <location>
        <begin position="643"/>
        <end position="677"/>
    </location>
</feature>
<feature type="domain" description="EF-hand 2" evidence="4">
    <location>
        <begin position="686"/>
        <end position="719"/>
    </location>
</feature>
<feature type="domain" description="EF-hand 3" evidence="4">
    <location>
        <begin position="716"/>
        <end position="751"/>
    </location>
</feature>
<feature type="domain" description="EF-hand 4" evidence="4">
    <location>
        <begin position="781"/>
        <end position="815"/>
    </location>
</feature>
<feature type="region of interest" description="Disordered" evidence="5">
    <location>
        <begin position="7"/>
        <end position="36"/>
    </location>
</feature>
<feature type="region of interest" description="Domain III">
    <location>
        <begin position="418"/>
        <end position="586"/>
    </location>
</feature>
<feature type="region of interest" description="Linker">
    <location>
        <begin position="587"/>
        <end position="649"/>
    </location>
</feature>
<feature type="region of interest" description="Disordered" evidence="5">
    <location>
        <begin position="605"/>
        <end position="646"/>
    </location>
</feature>
<feature type="region of interest" description="Domain IV">
    <location>
        <begin position="650"/>
        <end position="815"/>
    </location>
</feature>
<feature type="compositionally biased region" description="Basic and acidic residues" evidence="5">
    <location>
        <begin position="616"/>
        <end position="628"/>
    </location>
</feature>
<feature type="compositionally biased region" description="Low complexity" evidence="5">
    <location>
        <begin position="629"/>
        <end position="639"/>
    </location>
</feature>
<feature type="active site" evidence="3">
    <location>
        <position position="129"/>
    </location>
</feature>
<feature type="active site" evidence="3">
    <location>
        <position position="334"/>
    </location>
</feature>
<feature type="active site" evidence="3">
    <location>
        <position position="358"/>
    </location>
</feature>
<feature type="binding site" evidence="2">
    <location>
        <position position="656"/>
    </location>
    <ligand>
        <name>Ca(2+)</name>
        <dbReference type="ChEBI" id="CHEBI:29108"/>
        <label>1</label>
    </ligand>
</feature>
<feature type="binding site" evidence="2">
    <location>
        <position position="659"/>
    </location>
    <ligand>
        <name>Ca(2+)</name>
        <dbReference type="ChEBI" id="CHEBI:29108"/>
        <label>1</label>
    </ligand>
</feature>
<feature type="binding site" evidence="2">
    <location>
        <position position="661"/>
    </location>
    <ligand>
        <name>Ca(2+)</name>
        <dbReference type="ChEBI" id="CHEBI:29108"/>
        <label>1</label>
    </ligand>
</feature>
<feature type="binding site" evidence="2">
    <location>
        <position position="666"/>
    </location>
    <ligand>
        <name>Ca(2+)</name>
        <dbReference type="ChEBI" id="CHEBI:29108"/>
        <label>1</label>
    </ligand>
</feature>
<feature type="binding site" evidence="4">
    <location>
        <position position="699"/>
    </location>
    <ligand>
        <name>Ca(2+)</name>
        <dbReference type="ChEBI" id="CHEBI:29108"/>
        <label>2</label>
    </ligand>
</feature>
<feature type="binding site" evidence="4">
    <location>
        <position position="701"/>
    </location>
    <ligand>
        <name>Ca(2+)</name>
        <dbReference type="ChEBI" id="CHEBI:29108"/>
        <label>2</label>
    </ligand>
</feature>
<feature type="binding site" evidence="4">
    <location>
        <position position="703"/>
    </location>
    <ligand>
        <name>Ca(2+)</name>
        <dbReference type="ChEBI" id="CHEBI:29108"/>
        <label>2</label>
    </ligand>
</feature>
<feature type="binding site" evidence="4">
    <location>
        <position position="705"/>
    </location>
    <ligand>
        <name>Ca(2+)</name>
        <dbReference type="ChEBI" id="CHEBI:29108"/>
        <label>2</label>
    </ligand>
</feature>
<feature type="binding site" evidence="4">
    <location>
        <position position="710"/>
    </location>
    <ligand>
        <name>Ca(2+)</name>
        <dbReference type="ChEBI" id="CHEBI:29108"/>
        <label>2</label>
    </ligand>
</feature>
<feature type="binding site" evidence="4">
    <location>
        <position position="729"/>
    </location>
    <ligand>
        <name>Ca(2+)</name>
        <dbReference type="ChEBI" id="CHEBI:29108"/>
        <label>3</label>
    </ligand>
</feature>
<feature type="binding site" evidence="4">
    <location>
        <position position="731"/>
    </location>
    <ligand>
        <name>Ca(2+)</name>
        <dbReference type="ChEBI" id="CHEBI:29108"/>
        <label>3</label>
    </ligand>
</feature>
<feature type="binding site" evidence="4">
    <location>
        <position position="733"/>
    </location>
    <ligand>
        <name>Ca(2+)</name>
        <dbReference type="ChEBI" id="CHEBI:29108"/>
        <label>3</label>
    </ligand>
</feature>
<feature type="binding site" evidence="4">
    <location>
        <position position="735"/>
    </location>
    <ligand>
        <name>Ca(2+)</name>
        <dbReference type="ChEBI" id="CHEBI:29108"/>
        <label>3</label>
    </ligand>
</feature>
<feature type="binding site" evidence="4">
    <location>
        <position position="740"/>
    </location>
    <ligand>
        <name>Ca(2+)</name>
        <dbReference type="ChEBI" id="CHEBI:29108"/>
        <label>3</label>
    </ligand>
</feature>
<feature type="binding site" evidence="2">
    <location>
        <position position="794"/>
    </location>
    <ligand>
        <name>Ca(2+)</name>
        <dbReference type="ChEBI" id="CHEBI:29108"/>
        <label>4</label>
    </ligand>
</feature>
<feature type="binding site" evidence="2">
    <location>
        <position position="796"/>
    </location>
    <ligand>
        <name>Ca(2+)</name>
        <dbReference type="ChEBI" id="CHEBI:29108"/>
        <label>4</label>
    </ligand>
</feature>
<feature type="binding site" evidence="2">
    <location>
        <position position="798"/>
    </location>
    <ligand>
        <name>Ca(2+)</name>
        <dbReference type="ChEBI" id="CHEBI:29108"/>
        <label>4</label>
    </ligand>
</feature>
<feature type="binding site" evidence="2">
    <location>
        <position position="800"/>
    </location>
    <ligand>
        <name>Ca(2+)</name>
        <dbReference type="ChEBI" id="CHEBI:29108"/>
        <label>4</label>
    </ligand>
</feature>